<comment type="function">
    <text evidence="1">Molecular chaperone. Has ATPase activity.</text>
</comment>
<comment type="subunit">
    <text evidence="1">Homodimer.</text>
</comment>
<comment type="subcellular location">
    <subcellularLocation>
        <location evidence="1">Cytoplasm</location>
    </subcellularLocation>
</comment>
<comment type="similarity">
    <text evidence="1">Belongs to the heat shock protein 90 family.</text>
</comment>
<organism>
    <name type="scientific">Dechloromonas aromatica (strain RCB)</name>
    <dbReference type="NCBI Taxonomy" id="159087"/>
    <lineage>
        <taxon>Bacteria</taxon>
        <taxon>Pseudomonadati</taxon>
        <taxon>Pseudomonadota</taxon>
        <taxon>Betaproteobacteria</taxon>
        <taxon>Rhodocyclales</taxon>
        <taxon>Azonexaceae</taxon>
        <taxon>Dechloromonas</taxon>
    </lineage>
</organism>
<name>HTPG_DECAR</name>
<sequence length="636" mass="71568">MSESATANANRETLGFQAEVKQLLQLMIHSLYSNKEIFLRELVSNASDACDKLRFEALNNSALYGDDSELKIRIAFDKDARTITISDNGIGLSRDEAVEHLGTIAKSGTKEFFSALTGDQAKDAHLIGQFGVGFYSSFIIADKVTVVSRRAGVEANQAVCWESGGEGDYTVEMVEKATRGTDVTLHLREGEDEFLGGWKLKSIIRKYSDHITLPIVMKKEDWKDGEQVMTEEDETVNQANALWVRSKSDITEEQYKEFYKHVAHDFEDPLAWTHARVEGKQEYTQLLYIPARAPFDLWDRNARHGIKLYVRRVFIMDDAEQLMPLYMRFVRGVVDSSDLPLNVSREILQQSKDIDGIRSGCTRKVLGMLEDLAENDKEKYAKFWEAFGSVLKEGVGEDHANKEKIAGLIRFSSTHNDTAEQNVSLADYIGRMKEGQEKIYFVTADTFNAAKNSPHLEIFRKKGIEVLLLSDRVDEWVVGHLTEFDGKHLQSVAKGGLDLGKLEDEAEKQEAEKAADDYKELLEKVKTSLGDKVKDVRVTYRLTDSPSCLVSDEHDPSGNLARLMKAAGQPMPNSKPILEINPQHPAVMRLKYEESRFDDWAALLFEQATLAEGGQLDDPAGFVKRINDLMMALSAK</sequence>
<protein>
    <recommendedName>
        <fullName evidence="1">Chaperone protein HtpG</fullName>
    </recommendedName>
    <alternativeName>
        <fullName evidence="1">Heat shock protein HtpG</fullName>
    </alternativeName>
    <alternativeName>
        <fullName evidence="1">High temperature protein G</fullName>
    </alternativeName>
</protein>
<gene>
    <name evidence="1" type="primary">htpG</name>
    <name type="ordered locus">Daro_1127</name>
</gene>
<dbReference type="EMBL" id="CP000089">
    <property type="protein sequence ID" value="AAZ45883.1"/>
    <property type="molecule type" value="Genomic_DNA"/>
</dbReference>
<dbReference type="SMR" id="Q47GZ8"/>
<dbReference type="STRING" id="159087.Daro_1127"/>
<dbReference type="KEGG" id="dar:Daro_1127"/>
<dbReference type="eggNOG" id="COG0326">
    <property type="taxonomic scope" value="Bacteria"/>
</dbReference>
<dbReference type="HOGENOM" id="CLU_006684_3_0_4"/>
<dbReference type="OrthoDB" id="9802640at2"/>
<dbReference type="GO" id="GO:0005737">
    <property type="term" value="C:cytoplasm"/>
    <property type="evidence" value="ECO:0007669"/>
    <property type="project" value="UniProtKB-SubCell"/>
</dbReference>
<dbReference type="GO" id="GO:0005524">
    <property type="term" value="F:ATP binding"/>
    <property type="evidence" value="ECO:0007669"/>
    <property type="project" value="UniProtKB-UniRule"/>
</dbReference>
<dbReference type="GO" id="GO:0016887">
    <property type="term" value="F:ATP hydrolysis activity"/>
    <property type="evidence" value="ECO:0007669"/>
    <property type="project" value="InterPro"/>
</dbReference>
<dbReference type="GO" id="GO:0140662">
    <property type="term" value="F:ATP-dependent protein folding chaperone"/>
    <property type="evidence" value="ECO:0007669"/>
    <property type="project" value="InterPro"/>
</dbReference>
<dbReference type="GO" id="GO:0051082">
    <property type="term" value="F:unfolded protein binding"/>
    <property type="evidence" value="ECO:0007669"/>
    <property type="project" value="UniProtKB-UniRule"/>
</dbReference>
<dbReference type="CDD" id="cd16927">
    <property type="entry name" value="HATPase_Hsp90-like"/>
    <property type="match status" value="1"/>
</dbReference>
<dbReference type="FunFam" id="3.30.230.80:FF:000002">
    <property type="entry name" value="Molecular chaperone HtpG"/>
    <property type="match status" value="1"/>
</dbReference>
<dbReference type="FunFam" id="3.30.565.10:FF:000009">
    <property type="entry name" value="Molecular chaperone HtpG"/>
    <property type="match status" value="1"/>
</dbReference>
<dbReference type="Gene3D" id="3.30.230.80">
    <property type="match status" value="1"/>
</dbReference>
<dbReference type="Gene3D" id="3.40.50.11260">
    <property type="match status" value="1"/>
</dbReference>
<dbReference type="Gene3D" id="1.20.120.790">
    <property type="entry name" value="Heat shock protein 90, C-terminal domain"/>
    <property type="match status" value="1"/>
</dbReference>
<dbReference type="Gene3D" id="3.30.565.10">
    <property type="entry name" value="Histidine kinase-like ATPase, C-terminal domain"/>
    <property type="match status" value="1"/>
</dbReference>
<dbReference type="HAMAP" id="MF_00505">
    <property type="entry name" value="HSP90"/>
    <property type="match status" value="1"/>
</dbReference>
<dbReference type="InterPro" id="IPR036890">
    <property type="entry name" value="HATPase_C_sf"/>
</dbReference>
<dbReference type="InterPro" id="IPR019805">
    <property type="entry name" value="Heat_shock_protein_90_CS"/>
</dbReference>
<dbReference type="InterPro" id="IPR037196">
    <property type="entry name" value="HSP90_C"/>
</dbReference>
<dbReference type="InterPro" id="IPR001404">
    <property type="entry name" value="Hsp90_fam"/>
</dbReference>
<dbReference type="InterPro" id="IPR020575">
    <property type="entry name" value="Hsp90_N"/>
</dbReference>
<dbReference type="InterPro" id="IPR020568">
    <property type="entry name" value="Ribosomal_Su5_D2-typ_SF"/>
</dbReference>
<dbReference type="NCBIfam" id="NF003555">
    <property type="entry name" value="PRK05218.1"/>
    <property type="match status" value="1"/>
</dbReference>
<dbReference type="PANTHER" id="PTHR11528">
    <property type="entry name" value="HEAT SHOCK PROTEIN 90 FAMILY MEMBER"/>
    <property type="match status" value="1"/>
</dbReference>
<dbReference type="Pfam" id="PF13589">
    <property type="entry name" value="HATPase_c_3"/>
    <property type="match status" value="1"/>
</dbReference>
<dbReference type="Pfam" id="PF00183">
    <property type="entry name" value="HSP90"/>
    <property type="match status" value="1"/>
</dbReference>
<dbReference type="PIRSF" id="PIRSF002583">
    <property type="entry name" value="Hsp90"/>
    <property type="match status" value="1"/>
</dbReference>
<dbReference type="PRINTS" id="PR00775">
    <property type="entry name" value="HEATSHOCK90"/>
</dbReference>
<dbReference type="SMART" id="SM00387">
    <property type="entry name" value="HATPase_c"/>
    <property type="match status" value="1"/>
</dbReference>
<dbReference type="SUPFAM" id="SSF55874">
    <property type="entry name" value="ATPase domain of HSP90 chaperone/DNA topoisomerase II/histidine kinase"/>
    <property type="match status" value="1"/>
</dbReference>
<dbReference type="SUPFAM" id="SSF110942">
    <property type="entry name" value="HSP90 C-terminal domain"/>
    <property type="match status" value="1"/>
</dbReference>
<dbReference type="SUPFAM" id="SSF54211">
    <property type="entry name" value="Ribosomal protein S5 domain 2-like"/>
    <property type="match status" value="1"/>
</dbReference>
<dbReference type="PROSITE" id="PS00298">
    <property type="entry name" value="HSP90"/>
    <property type="match status" value="1"/>
</dbReference>
<accession>Q47GZ8</accession>
<reference key="1">
    <citation type="journal article" date="2009" name="BMC Genomics">
        <title>Metabolic analysis of the soil microbe Dechloromonas aromatica str. RCB: indications of a surprisingly complex life-style and cryptic anaerobic pathways for aromatic degradation.</title>
        <authorList>
            <person name="Salinero K.K."/>
            <person name="Keller K."/>
            <person name="Feil W.S."/>
            <person name="Feil H."/>
            <person name="Trong S."/>
            <person name="Di Bartolo G."/>
            <person name="Lapidus A."/>
        </authorList>
    </citation>
    <scope>NUCLEOTIDE SEQUENCE [LARGE SCALE GENOMIC DNA]</scope>
    <source>
        <strain>RCB</strain>
    </source>
</reference>
<proteinExistence type="inferred from homology"/>
<keyword id="KW-0067">ATP-binding</keyword>
<keyword id="KW-0143">Chaperone</keyword>
<keyword id="KW-0963">Cytoplasm</keyword>
<keyword id="KW-0547">Nucleotide-binding</keyword>
<keyword id="KW-0346">Stress response</keyword>
<evidence type="ECO:0000255" key="1">
    <source>
        <dbReference type="HAMAP-Rule" id="MF_00505"/>
    </source>
</evidence>
<feature type="chain" id="PRO_0000224203" description="Chaperone protein HtpG">
    <location>
        <begin position="1"/>
        <end position="636"/>
    </location>
</feature>
<feature type="region of interest" description="A; substrate-binding" evidence="1">
    <location>
        <begin position="1"/>
        <end position="345"/>
    </location>
</feature>
<feature type="region of interest" description="B" evidence="1">
    <location>
        <begin position="346"/>
        <end position="562"/>
    </location>
</feature>
<feature type="region of interest" description="C" evidence="1">
    <location>
        <begin position="563"/>
        <end position="636"/>
    </location>
</feature>